<feature type="chain" id="PRO_0000344415" description="Putative uncharacterized protein DDB_G0292614">
    <location>
        <begin position="1"/>
        <end position="93"/>
    </location>
</feature>
<feature type="coiled-coil region" evidence="1">
    <location>
        <begin position="25"/>
        <end position="68"/>
    </location>
</feature>
<gene>
    <name type="ORF">DDB_G0292614</name>
</gene>
<evidence type="ECO:0000255" key="1"/>
<dbReference type="EMBL" id="AAFI02000194">
    <property type="protein sequence ID" value="EAL61110.1"/>
    <property type="molecule type" value="Genomic_DNA"/>
</dbReference>
<dbReference type="RefSeq" id="XP_629524.1">
    <property type="nucleotide sequence ID" value="XM_629522.1"/>
</dbReference>
<dbReference type="SMR" id="Q54CZ6"/>
<dbReference type="PaxDb" id="44689-DDB0184476"/>
<dbReference type="EnsemblProtists" id="EAL61110">
    <property type="protein sequence ID" value="EAL61110"/>
    <property type="gene ID" value="DDB_G0292614"/>
</dbReference>
<dbReference type="GeneID" id="8628779"/>
<dbReference type="KEGG" id="ddi:DDB_G0292614"/>
<dbReference type="dictyBase" id="DDB_G0292614"/>
<dbReference type="VEuPathDB" id="AmoebaDB:DDB_G0292614"/>
<dbReference type="HOGENOM" id="CLU_2404162_0_0_1"/>
<dbReference type="InParanoid" id="Q54CZ6"/>
<dbReference type="PRO" id="PR:Q54CZ6"/>
<dbReference type="Proteomes" id="UP000002195">
    <property type="component" value="Chromosome 6"/>
</dbReference>
<organism>
    <name type="scientific">Dictyostelium discoideum</name>
    <name type="common">Social amoeba</name>
    <dbReference type="NCBI Taxonomy" id="44689"/>
    <lineage>
        <taxon>Eukaryota</taxon>
        <taxon>Amoebozoa</taxon>
        <taxon>Evosea</taxon>
        <taxon>Eumycetozoa</taxon>
        <taxon>Dictyostelia</taxon>
        <taxon>Dictyosteliales</taxon>
        <taxon>Dictyosteliaceae</taxon>
        <taxon>Dictyostelium</taxon>
    </lineage>
</organism>
<proteinExistence type="predicted"/>
<reference key="1">
    <citation type="journal article" date="2005" name="Nature">
        <title>The genome of the social amoeba Dictyostelium discoideum.</title>
        <authorList>
            <person name="Eichinger L."/>
            <person name="Pachebat J.A."/>
            <person name="Gloeckner G."/>
            <person name="Rajandream M.A."/>
            <person name="Sucgang R."/>
            <person name="Berriman M."/>
            <person name="Song J."/>
            <person name="Olsen R."/>
            <person name="Szafranski K."/>
            <person name="Xu Q."/>
            <person name="Tunggal B."/>
            <person name="Kummerfeld S."/>
            <person name="Madera M."/>
            <person name="Konfortov B.A."/>
            <person name="Rivero F."/>
            <person name="Bankier A.T."/>
            <person name="Lehmann R."/>
            <person name="Hamlin N."/>
            <person name="Davies R."/>
            <person name="Gaudet P."/>
            <person name="Fey P."/>
            <person name="Pilcher K."/>
            <person name="Chen G."/>
            <person name="Saunders D."/>
            <person name="Sodergren E.J."/>
            <person name="Davis P."/>
            <person name="Kerhornou A."/>
            <person name="Nie X."/>
            <person name="Hall N."/>
            <person name="Anjard C."/>
            <person name="Hemphill L."/>
            <person name="Bason N."/>
            <person name="Farbrother P."/>
            <person name="Desany B."/>
            <person name="Just E."/>
            <person name="Morio T."/>
            <person name="Rost R."/>
            <person name="Churcher C.M."/>
            <person name="Cooper J."/>
            <person name="Haydock S."/>
            <person name="van Driessche N."/>
            <person name="Cronin A."/>
            <person name="Goodhead I."/>
            <person name="Muzny D.M."/>
            <person name="Mourier T."/>
            <person name="Pain A."/>
            <person name="Lu M."/>
            <person name="Harper D."/>
            <person name="Lindsay R."/>
            <person name="Hauser H."/>
            <person name="James K.D."/>
            <person name="Quiles M."/>
            <person name="Madan Babu M."/>
            <person name="Saito T."/>
            <person name="Buchrieser C."/>
            <person name="Wardroper A."/>
            <person name="Felder M."/>
            <person name="Thangavelu M."/>
            <person name="Johnson D."/>
            <person name="Knights A."/>
            <person name="Loulseged H."/>
            <person name="Mungall K.L."/>
            <person name="Oliver K."/>
            <person name="Price C."/>
            <person name="Quail M.A."/>
            <person name="Urushihara H."/>
            <person name="Hernandez J."/>
            <person name="Rabbinowitsch E."/>
            <person name="Steffen D."/>
            <person name="Sanders M."/>
            <person name="Ma J."/>
            <person name="Kohara Y."/>
            <person name="Sharp S."/>
            <person name="Simmonds M.N."/>
            <person name="Spiegler S."/>
            <person name="Tivey A."/>
            <person name="Sugano S."/>
            <person name="White B."/>
            <person name="Walker D."/>
            <person name="Woodward J.R."/>
            <person name="Winckler T."/>
            <person name="Tanaka Y."/>
            <person name="Shaulsky G."/>
            <person name="Schleicher M."/>
            <person name="Weinstock G.M."/>
            <person name="Rosenthal A."/>
            <person name="Cox E.C."/>
            <person name="Chisholm R.L."/>
            <person name="Gibbs R.A."/>
            <person name="Loomis W.F."/>
            <person name="Platzer M."/>
            <person name="Kay R.R."/>
            <person name="Williams J.G."/>
            <person name="Dear P.H."/>
            <person name="Noegel A.A."/>
            <person name="Barrell B.G."/>
            <person name="Kuspa A."/>
        </authorList>
    </citation>
    <scope>NUCLEOTIDE SEQUENCE [LARGE SCALE GENOMIC DNA]</scope>
    <source>
        <strain>AX4</strain>
    </source>
</reference>
<keyword id="KW-0175">Coiled coil</keyword>
<keyword id="KW-1185">Reference proteome</keyword>
<sequence>MEDFDDLVNRVTPDRPRGWNHLGCDIKKLSQVKSELEQGKALLEEEKKELIEKNSNLNLQISNMNHLKTFKDAIDLVYSNFSKIDIKDEPCLN</sequence>
<name>Y4476_DICDI</name>
<accession>Q54CZ6</accession>
<protein>
    <recommendedName>
        <fullName>Putative uncharacterized protein DDB_G0292614</fullName>
    </recommendedName>
</protein>